<proteinExistence type="inferred from homology"/>
<reference key="1">
    <citation type="journal article" date="2007" name="PLoS Genet.">
        <title>Patterns and implications of gene gain and loss in the evolution of Prochlorococcus.</title>
        <authorList>
            <person name="Kettler G.C."/>
            <person name="Martiny A.C."/>
            <person name="Huang K."/>
            <person name="Zucker J."/>
            <person name="Coleman M.L."/>
            <person name="Rodrigue S."/>
            <person name="Chen F."/>
            <person name="Lapidus A."/>
            <person name="Ferriera S."/>
            <person name="Johnson J."/>
            <person name="Steglich C."/>
            <person name="Church G.M."/>
            <person name="Richardson P."/>
            <person name="Chisholm S.W."/>
        </authorList>
    </citation>
    <scope>NUCLEOTIDE SEQUENCE [LARGE SCALE GENOMIC DNA]</scope>
    <source>
        <strain>MIT 9303</strain>
    </source>
</reference>
<keyword id="KW-0963">Cytoplasm</keyword>
<keyword id="KW-0378">Hydrolase</keyword>
<keyword id="KW-0479">Metal-binding</keyword>
<keyword id="KW-0547">Nucleotide-binding</keyword>
<evidence type="ECO:0000255" key="1">
    <source>
        <dbReference type="HAMAP-Rule" id="MF_00060"/>
    </source>
</evidence>
<dbReference type="EC" id="3.1.3.5" evidence="1"/>
<dbReference type="EMBL" id="CP000554">
    <property type="protein sequence ID" value="ABM78677.1"/>
    <property type="molecule type" value="Genomic_DNA"/>
</dbReference>
<dbReference type="RefSeq" id="WP_011826560.1">
    <property type="nucleotide sequence ID" value="NC_008820.1"/>
</dbReference>
<dbReference type="SMR" id="A2CB17"/>
<dbReference type="STRING" id="59922.P9303_19351"/>
<dbReference type="KEGG" id="pmf:P9303_19351"/>
<dbReference type="HOGENOM" id="CLU_045192_1_3_3"/>
<dbReference type="BioCyc" id="PMAR59922:G1G80-1681-MONOMER"/>
<dbReference type="Proteomes" id="UP000002274">
    <property type="component" value="Chromosome"/>
</dbReference>
<dbReference type="GO" id="GO:0005737">
    <property type="term" value="C:cytoplasm"/>
    <property type="evidence" value="ECO:0007669"/>
    <property type="project" value="UniProtKB-SubCell"/>
</dbReference>
<dbReference type="GO" id="GO:0008254">
    <property type="term" value="F:3'-nucleotidase activity"/>
    <property type="evidence" value="ECO:0007669"/>
    <property type="project" value="TreeGrafter"/>
</dbReference>
<dbReference type="GO" id="GO:0008253">
    <property type="term" value="F:5'-nucleotidase activity"/>
    <property type="evidence" value="ECO:0007669"/>
    <property type="project" value="UniProtKB-UniRule"/>
</dbReference>
<dbReference type="GO" id="GO:0004309">
    <property type="term" value="F:exopolyphosphatase activity"/>
    <property type="evidence" value="ECO:0007669"/>
    <property type="project" value="TreeGrafter"/>
</dbReference>
<dbReference type="GO" id="GO:0046872">
    <property type="term" value="F:metal ion binding"/>
    <property type="evidence" value="ECO:0007669"/>
    <property type="project" value="UniProtKB-UniRule"/>
</dbReference>
<dbReference type="GO" id="GO:0000166">
    <property type="term" value="F:nucleotide binding"/>
    <property type="evidence" value="ECO:0007669"/>
    <property type="project" value="UniProtKB-KW"/>
</dbReference>
<dbReference type="Gene3D" id="3.40.1210.10">
    <property type="entry name" value="Survival protein SurE-like phosphatase/nucleotidase"/>
    <property type="match status" value="1"/>
</dbReference>
<dbReference type="HAMAP" id="MF_00060">
    <property type="entry name" value="SurE"/>
    <property type="match status" value="1"/>
</dbReference>
<dbReference type="InterPro" id="IPR030048">
    <property type="entry name" value="SurE"/>
</dbReference>
<dbReference type="InterPro" id="IPR002828">
    <property type="entry name" value="SurE-like_Pase/nucleotidase"/>
</dbReference>
<dbReference type="InterPro" id="IPR036523">
    <property type="entry name" value="SurE-like_sf"/>
</dbReference>
<dbReference type="NCBIfam" id="NF001490">
    <property type="entry name" value="PRK00346.1-4"/>
    <property type="match status" value="1"/>
</dbReference>
<dbReference type="NCBIfam" id="NF001492">
    <property type="entry name" value="PRK00346.2-2"/>
    <property type="match status" value="1"/>
</dbReference>
<dbReference type="NCBIfam" id="TIGR00087">
    <property type="entry name" value="surE"/>
    <property type="match status" value="1"/>
</dbReference>
<dbReference type="PANTHER" id="PTHR30457">
    <property type="entry name" value="5'-NUCLEOTIDASE SURE"/>
    <property type="match status" value="1"/>
</dbReference>
<dbReference type="PANTHER" id="PTHR30457:SF12">
    <property type="entry name" value="5'_3'-NUCLEOTIDASE SURE"/>
    <property type="match status" value="1"/>
</dbReference>
<dbReference type="Pfam" id="PF01975">
    <property type="entry name" value="SurE"/>
    <property type="match status" value="1"/>
</dbReference>
<dbReference type="SUPFAM" id="SSF64167">
    <property type="entry name" value="SurE-like"/>
    <property type="match status" value="1"/>
</dbReference>
<feature type="chain" id="PRO_1000007763" description="5'-nucleotidase SurE">
    <location>
        <begin position="1"/>
        <end position="269"/>
    </location>
</feature>
<feature type="binding site" evidence="1">
    <location>
        <position position="11"/>
    </location>
    <ligand>
        <name>a divalent metal cation</name>
        <dbReference type="ChEBI" id="CHEBI:60240"/>
    </ligand>
</feature>
<feature type="binding site" evidence="1">
    <location>
        <position position="12"/>
    </location>
    <ligand>
        <name>a divalent metal cation</name>
        <dbReference type="ChEBI" id="CHEBI:60240"/>
    </ligand>
</feature>
<feature type="binding site" evidence="1">
    <location>
        <position position="43"/>
    </location>
    <ligand>
        <name>a divalent metal cation</name>
        <dbReference type="ChEBI" id="CHEBI:60240"/>
    </ligand>
</feature>
<feature type="binding site" evidence="1">
    <location>
        <position position="101"/>
    </location>
    <ligand>
        <name>a divalent metal cation</name>
        <dbReference type="ChEBI" id="CHEBI:60240"/>
    </ligand>
</feature>
<organism>
    <name type="scientific">Prochlorococcus marinus (strain MIT 9303)</name>
    <dbReference type="NCBI Taxonomy" id="59922"/>
    <lineage>
        <taxon>Bacteria</taxon>
        <taxon>Bacillati</taxon>
        <taxon>Cyanobacteriota</taxon>
        <taxon>Cyanophyceae</taxon>
        <taxon>Synechococcales</taxon>
        <taxon>Prochlorococcaceae</taxon>
        <taxon>Prochlorococcus</taxon>
    </lineage>
</organism>
<protein>
    <recommendedName>
        <fullName evidence="1">5'-nucleotidase SurE</fullName>
        <ecNumber evidence="1">3.1.3.5</ecNumber>
    </recommendedName>
    <alternativeName>
        <fullName evidence="1">Nucleoside 5'-monophosphate phosphohydrolase</fullName>
    </alternativeName>
</protein>
<gene>
    <name evidence="1" type="primary">surE</name>
    <name type="ordered locus">P9303_19351</name>
</gene>
<sequence>MTPLRILISNDDGVLAEGVRCLAAAAASRGHKVTVVCPDHERSATGHGLTIHTPIRAERVDELYGPGVTAWSCSGTPADCVKLALSELLAEKPDLVLSGVNHGPNLGTDVFCSGTVAAAMEGTLEGLPALAVSVACFQWRDFQAAAELAMDVAENALADNWPNNLLLNLNIPPCHPEQMGSLRWTRLSIRHYEEQFSRRVDPHSRTYFWLAGEVVKDLETAGDGPRDWPSDVAQIETNSPSLTPIQPDLFWRGDLSALPAACVANQPVR</sequence>
<comment type="function">
    <text evidence="1">Nucleotidase that shows phosphatase activity on nucleoside 5'-monophosphates.</text>
</comment>
<comment type="catalytic activity">
    <reaction evidence="1">
        <text>a ribonucleoside 5'-phosphate + H2O = a ribonucleoside + phosphate</text>
        <dbReference type="Rhea" id="RHEA:12484"/>
        <dbReference type="ChEBI" id="CHEBI:15377"/>
        <dbReference type="ChEBI" id="CHEBI:18254"/>
        <dbReference type="ChEBI" id="CHEBI:43474"/>
        <dbReference type="ChEBI" id="CHEBI:58043"/>
        <dbReference type="EC" id="3.1.3.5"/>
    </reaction>
</comment>
<comment type="cofactor">
    <cofactor evidence="1">
        <name>a divalent metal cation</name>
        <dbReference type="ChEBI" id="CHEBI:60240"/>
    </cofactor>
    <text evidence="1">Binds 1 divalent metal cation per subunit.</text>
</comment>
<comment type="subcellular location">
    <subcellularLocation>
        <location evidence="1">Cytoplasm</location>
    </subcellularLocation>
</comment>
<comment type="similarity">
    <text evidence="1">Belongs to the SurE nucleotidase family.</text>
</comment>
<accession>A2CB17</accession>
<name>SURE_PROM3</name>